<comment type="catalytic activity">
    <reaction evidence="1">
        <text>1-(5-phospho-beta-D-ribosyl)-5-[(5-phospho-beta-D-ribosylamino)methylideneamino]imidazole-4-carboxamide = 5-[(5-phospho-1-deoxy-D-ribulos-1-ylimino)methylamino]-1-(5-phospho-beta-D-ribosyl)imidazole-4-carboxamide</text>
        <dbReference type="Rhea" id="RHEA:15469"/>
        <dbReference type="ChEBI" id="CHEBI:58435"/>
        <dbReference type="ChEBI" id="CHEBI:58525"/>
        <dbReference type="EC" id="5.3.1.16"/>
    </reaction>
</comment>
<comment type="pathway">
    <text evidence="1">Amino-acid biosynthesis; L-histidine biosynthesis; L-histidine from 5-phospho-alpha-D-ribose 1-diphosphate: step 4/9.</text>
</comment>
<comment type="subcellular location">
    <subcellularLocation>
        <location evidence="1">Cytoplasm</location>
    </subcellularLocation>
</comment>
<comment type="similarity">
    <text evidence="1">Belongs to the HisA/HisF family.</text>
</comment>
<accession>B1ZW12</accession>
<evidence type="ECO:0000255" key="1">
    <source>
        <dbReference type="HAMAP-Rule" id="MF_01014"/>
    </source>
</evidence>
<name>HIS4_OPITP</name>
<reference key="1">
    <citation type="journal article" date="2011" name="J. Bacteriol.">
        <title>Genome sequence of the verrucomicrobium Opitutus terrae PB90-1, an abundant inhabitant of rice paddy soil ecosystems.</title>
        <authorList>
            <person name="van Passel M.W."/>
            <person name="Kant R."/>
            <person name="Palva A."/>
            <person name="Copeland A."/>
            <person name="Lucas S."/>
            <person name="Lapidus A."/>
            <person name="Glavina del Rio T."/>
            <person name="Pitluck S."/>
            <person name="Goltsman E."/>
            <person name="Clum A."/>
            <person name="Sun H."/>
            <person name="Schmutz J."/>
            <person name="Larimer F.W."/>
            <person name="Land M.L."/>
            <person name="Hauser L."/>
            <person name="Kyrpides N."/>
            <person name="Mikhailova N."/>
            <person name="Richardson P.P."/>
            <person name="Janssen P.H."/>
            <person name="de Vos W.M."/>
            <person name="Smidt H."/>
        </authorList>
    </citation>
    <scope>NUCLEOTIDE SEQUENCE [LARGE SCALE GENOMIC DNA]</scope>
    <source>
        <strain>DSM 11246 / JCM 15787 / PB90-1</strain>
    </source>
</reference>
<sequence>MTIYPAIDIKGGRCVRLTQGRAEQETIYAQNPADVAMQFRAAGSEWVHVVDLDGAFAGEPQNLAAVQAIVAVGMKVQFGGGLRTRAAVERALALGVSRVVLGTRAAESESFVGELVQAFGDKIAVGIDAKNGKVAVKGWVATADLSTLVLARRMDTLGVATLIHTDIGTDGMLTGPNLAAQEALCSAVKSRVIASGGVSRRDDVVNLAKLAQRHANLDGVIVGKALYERRVELADLLSLAAAS</sequence>
<proteinExistence type="inferred from homology"/>
<organism>
    <name type="scientific">Opitutus terrae (strain DSM 11246 / JCM 15787 / PB90-1)</name>
    <dbReference type="NCBI Taxonomy" id="452637"/>
    <lineage>
        <taxon>Bacteria</taxon>
        <taxon>Pseudomonadati</taxon>
        <taxon>Verrucomicrobiota</taxon>
        <taxon>Opitutia</taxon>
        <taxon>Opitutales</taxon>
        <taxon>Opitutaceae</taxon>
        <taxon>Opitutus</taxon>
    </lineage>
</organism>
<gene>
    <name evidence="1" type="primary">hisA</name>
    <name type="ordered locus">Oter_2745</name>
</gene>
<protein>
    <recommendedName>
        <fullName evidence="1">1-(5-phosphoribosyl)-5-[(5-phosphoribosylamino)methylideneamino] imidazole-4-carboxamide isomerase</fullName>
        <ecNumber evidence="1">5.3.1.16</ecNumber>
    </recommendedName>
    <alternativeName>
        <fullName evidence="1">Phosphoribosylformimino-5-aminoimidazole carboxamide ribotide isomerase</fullName>
    </alternativeName>
</protein>
<keyword id="KW-0028">Amino-acid biosynthesis</keyword>
<keyword id="KW-0963">Cytoplasm</keyword>
<keyword id="KW-0368">Histidine biosynthesis</keyword>
<keyword id="KW-0413">Isomerase</keyword>
<keyword id="KW-1185">Reference proteome</keyword>
<dbReference type="EC" id="5.3.1.16" evidence="1"/>
<dbReference type="EMBL" id="CP001032">
    <property type="protein sequence ID" value="ACB76026.1"/>
    <property type="molecule type" value="Genomic_DNA"/>
</dbReference>
<dbReference type="RefSeq" id="WP_012375561.1">
    <property type="nucleotide sequence ID" value="NC_010571.1"/>
</dbReference>
<dbReference type="SMR" id="B1ZW12"/>
<dbReference type="STRING" id="452637.Oter_2745"/>
<dbReference type="KEGG" id="ote:Oter_2745"/>
<dbReference type="eggNOG" id="COG0106">
    <property type="taxonomic scope" value="Bacteria"/>
</dbReference>
<dbReference type="HOGENOM" id="CLU_048577_1_1_0"/>
<dbReference type="OrthoDB" id="9781704at2"/>
<dbReference type="UniPathway" id="UPA00031">
    <property type="reaction ID" value="UER00009"/>
</dbReference>
<dbReference type="Proteomes" id="UP000007013">
    <property type="component" value="Chromosome"/>
</dbReference>
<dbReference type="GO" id="GO:0005737">
    <property type="term" value="C:cytoplasm"/>
    <property type="evidence" value="ECO:0007669"/>
    <property type="project" value="UniProtKB-SubCell"/>
</dbReference>
<dbReference type="GO" id="GO:0003949">
    <property type="term" value="F:1-(5-phosphoribosyl)-5-[(5-phosphoribosylamino)methylideneamino]imidazole-4-carboxamide isomerase activity"/>
    <property type="evidence" value="ECO:0007669"/>
    <property type="project" value="UniProtKB-UniRule"/>
</dbReference>
<dbReference type="GO" id="GO:0000105">
    <property type="term" value="P:L-histidine biosynthetic process"/>
    <property type="evidence" value="ECO:0007669"/>
    <property type="project" value="UniProtKB-UniRule"/>
</dbReference>
<dbReference type="GO" id="GO:0000162">
    <property type="term" value="P:L-tryptophan biosynthetic process"/>
    <property type="evidence" value="ECO:0007669"/>
    <property type="project" value="TreeGrafter"/>
</dbReference>
<dbReference type="CDD" id="cd04732">
    <property type="entry name" value="HisA"/>
    <property type="match status" value="1"/>
</dbReference>
<dbReference type="FunFam" id="3.20.20.70:FF:000009">
    <property type="entry name" value="1-(5-phosphoribosyl)-5-[(5-phosphoribosylamino)methylideneamino] imidazole-4-carboxamide isomerase"/>
    <property type="match status" value="1"/>
</dbReference>
<dbReference type="Gene3D" id="3.20.20.70">
    <property type="entry name" value="Aldolase class I"/>
    <property type="match status" value="1"/>
</dbReference>
<dbReference type="HAMAP" id="MF_01014">
    <property type="entry name" value="HisA"/>
    <property type="match status" value="1"/>
</dbReference>
<dbReference type="InterPro" id="IPR013785">
    <property type="entry name" value="Aldolase_TIM"/>
</dbReference>
<dbReference type="InterPro" id="IPR006062">
    <property type="entry name" value="His_biosynth"/>
</dbReference>
<dbReference type="InterPro" id="IPR006063">
    <property type="entry name" value="HisA_bact_arch"/>
</dbReference>
<dbReference type="InterPro" id="IPR044524">
    <property type="entry name" value="Isoase_HisA-like"/>
</dbReference>
<dbReference type="InterPro" id="IPR023016">
    <property type="entry name" value="Isoase_HisA-like_bact"/>
</dbReference>
<dbReference type="InterPro" id="IPR011060">
    <property type="entry name" value="RibuloseP-bd_barrel"/>
</dbReference>
<dbReference type="NCBIfam" id="TIGR00007">
    <property type="entry name" value="1-(5-phosphoribosyl)-5-[(5-phosphoribosylamino)methylideneamino]imidazole-4-carboxamide isomerase"/>
    <property type="match status" value="1"/>
</dbReference>
<dbReference type="PANTHER" id="PTHR43090">
    <property type="entry name" value="1-(5-PHOSPHORIBOSYL)-5-[(5-PHOSPHORIBOSYLAMINO)METHYLIDENEAMINO] IMIDAZOLE-4-CARBOXAMIDE ISOMERASE"/>
    <property type="match status" value="1"/>
</dbReference>
<dbReference type="PANTHER" id="PTHR43090:SF2">
    <property type="entry name" value="1-(5-PHOSPHORIBOSYL)-5-[(5-PHOSPHORIBOSYLAMINO)METHYLIDENEAMINO] IMIDAZOLE-4-CARBOXAMIDE ISOMERASE"/>
    <property type="match status" value="1"/>
</dbReference>
<dbReference type="Pfam" id="PF00977">
    <property type="entry name" value="His_biosynth"/>
    <property type="match status" value="1"/>
</dbReference>
<dbReference type="SUPFAM" id="SSF51366">
    <property type="entry name" value="Ribulose-phoshate binding barrel"/>
    <property type="match status" value="1"/>
</dbReference>
<feature type="chain" id="PRO_1000213231" description="1-(5-phosphoribosyl)-5-[(5-phosphoribosylamino)methylideneamino] imidazole-4-carboxamide isomerase">
    <location>
        <begin position="1"/>
        <end position="243"/>
    </location>
</feature>
<feature type="active site" description="Proton acceptor" evidence="1">
    <location>
        <position position="8"/>
    </location>
</feature>
<feature type="active site" description="Proton donor" evidence="1">
    <location>
        <position position="128"/>
    </location>
</feature>